<comment type="function">
    <text evidence="1">This protein binds specifically to 23S rRNA. It makes multiple contacts with different domains of the 23S rRNA in the assembled 50S subunit and ribosome.</text>
</comment>
<comment type="function">
    <text evidence="1">The globular domain of the protein is located near the polypeptide exit tunnel on the outside of the subunit, while an extended beta-hairpin is found that lines the wall of the exit tunnel in the center of the 70S ribosome.</text>
</comment>
<comment type="subunit">
    <text evidence="1">Part of the 50S ribosomal subunit.</text>
</comment>
<comment type="similarity">
    <text evidence="1">Belongs to the universal ribosomal protein uL22 family.</text>
</comment>
<dbReference type="EMBL" id="DP000238">
    <property type="protein sequence ID" value="ABK77495.1"/>
    <property type="molecule type" value="Genomic_DNA"/>
</dbReference>
<dbReference type="SMR" id="A0RVX8"/>
<dbReference type="STRING" id="414004.CENSYa_0862"/>
<dbReference type="EnsemblBacteria" id="ABK77495">
    <property type="protein sequence ID" value="ABK77495"/>
    <property type="gene ID" value="CENSYa_0862"/>
</dbReference>
<dbReference type="KEGG" id="csy:CENSYa_0862"/>
<dbReference type="PATRIC" id="fig|414004.10.peg.796"/>
<dbReference type="HOGENOM" id="CLU_083987_0_2_2"/>
<dbReference type="Proteomes" id="UP000000758">
    <property type="component" value="Chromosome"/>
</dbReference>
<dbReference type="GO" id="GO:0022625">
    <property type="term" value="C:cytosolic large ribosomal subunit"/>
    <property type="evidence" value="ECO:0007669"/>
    <property type="project" value="TreeGrafter"/>
</dbReference>
<dbReference type="GO" id="GO:0019843">
    <property type="term" value="F:rRNA binding"/>
    <property type="evidence" value="ECO:0007669"/>
    <property type="project" value="UniProtKB-UniRule"/>
</dbReference>
<dbReference type="GO" id="GO:0003735">
    <property type="term" value="F:structural constituent of ribosome"/>
    <property type="evidence" value="ECO:0007669"/>
    <property type="project" value="InterPro"/>
</dbReference>
<dbReference type="GO" id="GO:0002181">
    <property type="term" value="P:cytoplasmic translation"/>
    <property type="evidence" value="ECO:0007669"/>
    <property type="project" value="TreeGrafter"/>
</dbReference>
<dbReference type="CDD" id="cd00336">
    <property type="entry name" value="Ribosomal_L22"/>
    <property type="match status" value="1"/>
</dbReference>
<dbReference type="FunFam" id="3.90.470.10:FF:000015">
    <property type="entry name" value="50S ribosomal protein L22"/>
    <property type="match status" value="1"/>
</dbReference>
<dbReference type="Gene3D" id="3.90.470.10">
    <property type="entry name" value="Ribosomal protein L22/L17"/>
    <property type="match status" value="1"/>
</dbReference>
<dbReference type="HAMAP" id="MF_01331_A">
    <property type="entry name" value="Ribosomal_uL22_A"/>
    <property type="match status" value="1"/>
</dbReference>
<dbReference type="InterPro" id="IPR001063">
    <property type="entry name" value="Ribosomal_uL22"/>
</dbReference>
<dbReference type="InterPro" id="IPR005721">
    <property type="entry name" value="Ribosomal_uL22_euk/arc"/>
</dbReference>
<dbReference type="InterPro" id="IPR036394">
    <property type="entry name" value="Ribosomal_uL22_sf"/>
</dbReference>
<dbReference type="NCBIfam" id="NF003260">
    <property type="entry name" value="PRK04223.1"/>
    <property type="match status" value="1"/>
</dbReference>
<dbReference type="NCBIfam" id="TIGR01038">
    <property type="entry name" value="uL22_arch_euk"/>
    <property type="match status" value="1"/>
</dbReference>
<dbReference type="PANTHER" id="PTHR11593">
    <property type="entry name" value="60S RIBOSOMAL PROTEIN L17"/>
    <property type="match status" value="1"/>
</dbReference>
<dbReference type="PANTHER" id="PTHR11593:SF10">
    <property type="entry name" value="60S RIBOSOMAL PROTEIN L17"/>
    <property type="match status" value="1"/>
</dbReference>
<dbReference type="Pfam" id="PF00237">
    <property type="entry name" value="Ribosomal_L22"/>
    <property type="match status" value="1"/>
</dbReference>
<dbReference type="SUPFAM" id="SSF54843">
    <property type="entry name" value="Ribosomal protein L22"/>
    <property type="match status" value="1"/>
</dbReference>
<feature type="chain" id="PRO_0000354539" description="Large ribosomal subunit protein uL22">
    <location>
        <begin position="1"/>
        <end position="152"/>
    </location>
</feature>
<organism>
    <name type="scientific">Cenarchaeum symbiosum (strain A)</name>
    <dbReference type="NCBI Taxonomy" id="414004"/>
    <lineage>
        <taxon>Archaea</taxon>
        <taxon>Nitrososphaerota</taxon>
        <taxon>Candidatus Cenarchaeales</taxon>
        <taxon>Candidatus Cenarchaeaceae</taxon>
        <taxon>Candidatus Cenarchaeum</taxon>
    </lineage>
</organism>
<keyword id="KW-1185">Reference proteome</keyword>
<keyword id="KW-0687">Ribonucleoprotein</keyword>
<keyword id="KW-0689">Ribosomal protein</keyword>
<keyword id="KW-0694">RNA-binding</keyword>
<keyword id="KW-0699">rRNA-binding</keyword>
<name>RL22_CENSY</name>
<proteinExistence type="inferred from homology"/>
<accession>A0RVX8</accession>
<reference key="1">
    <citation type="journal article" date="2006" name="Proc. Natl. Acad. Sci. U.S.A.">
        <title>Genomic analysis of the uncultivated marine crenarchaeote Cenarchaeum symbiosum.</title>
        <authorList>
            <person name="Hallam S.J."/>
            <person name="Konstantinidis K.T."/>
            <person name="Putnam N."/>
            <person name="Schleper C."/>
            <person name="Watanabe Y."/>
            <person name="Sugahara J."/>
            <person name="Preston C."/>
            <person name="de la Torre J."/>
            <person name="Richardson P.M."/>
            <person name="DeLong E.F."/>
        </authorList>
    </citation>
    <scope>NUCLEOTIDE SEQUENCE [LARGE SCALE GENOMIC DNA]</scope>
    <source>
        <strain>A</strain>
    </source>
</reference>
<evidence type="ECO:0000255" key="1">
    <source>
        <dbReference type="HAMAP-Rule" id="MF_01331"/>
    </source>
</evidence>
<evidence type="ECO:0000305" key="2"/>
<sequence length="152" mass="17338">MGDFGYSFEGYDPTRHVRASLREKQISHKHAREISLHIRGMTVEKARDFLQAVIEKKRAVPFRRFKRQVGHRSDPGVMAGRYPEKSAAEFIKLLDNLESNAEYKGMDLDRLTIVGAVAHKGILIKRFIPRAMGRSTPKNNVLTHVELVAREA</sequence>
<protein>
    <recommendedName>
        <fullName evidence="1">Large ribosomal subunit protein uL22</fullName>
    </recommendedName>
    <alternativeName>
        <fullName evidence="2">50S ribosomal protein L22</fullName>
    </alternativeName>
</protein>
<gene>
    <name evidence="1" type="primary">rpl22</name>
    <name type="ordered locus">CENSYa_0862</name>
</gene>